<feature type="chain" id="PRO_0000324503" description="Spore membrane assembly protein 2">
    <location>
        <begin position="1"/>
        <end position="362"/>
    </location>
</feature>
<feature type="topological domain" description="Cytoplasmic" evidence="2">
    <location>
        <begin position="1"/>
        <end position="6"/>
    </location>
</feature>
<feature type="transmembrane region" description="Helical" evidence="2">
    <location>
        <begin position="7"/>
        <end position="27"/>
    </location>
</feature>
<feature type="topological domain" description="Lumenal" evidence="2">
    <location>
        <begin position="28"/>
        <end position="232"/>
    </location>
</feature>
<feature type="transmembrane region" description="Helical" evidence="2">
    <location>
        <begin position="233"/>
        <end position="253"/>
    </location>
</feature>
<feature type="topological domain" description="Cytoplasmic" evidence="2">
    <location>
        <begin position="254"/>
        <end position="267"/>
    </location>
</feature>
<feature type="transmembrane region" description="Helical" evidence="2">
    <location>
        <begin position="268"/>
        <end position="288"/>
    </location>
</feature>
<feature type="topological domain" description="Lumenal" evidence="2">
    <location>
        <begin position="289"/>
        <end position="312"/>
    </location>
</feature>
<feature type="transmembrane region" description="Helical" evidence="2">
    <location>
        <begin position="313"/>
        <end position="333"/>
    </location>
</feature>
<feature type="topological domain" description="Cytoplasmic" evidence="2">
    <location>
        <begin position="334"/>
        <end position="362"/>
    </location>
</feature>
<keyword id="KW-0472">Membrane</keyword>
<keyword id="KW-1185">Reference proteome</keyword>
<keyword id="KW-0749">Sporulation</keyword>
<keyword id="KW-0812">Transmembrane</keyword>
<keyword id="KW-1133">Transmembrane helix</keyword>
<organism>
    <name type="scientific">Vanderwaltozyma polyspora (strain ATCC 22028 / DSM 70294 / BCRC 21397 / CBS 2163 / NBRC 10782 / NRRL Y-8283 / UCD 57-17)</name>
    <name type="common">Kluyveromyces polysporus</name>
    <dbReference type="NCBI Taxonomy" id="436907"/>
    <lineage>
        <taxon>Eukaryota</taxon>
        <taxon>Fungi</taxon>
        <taxon>Dikarya</taxon>
        <taxon>Ascomycota</taxon>
        <taxon>Saccharomycotina</taxon>
        <taxon>Saccharomycetes</taxon>
        <taxon>Saccharomycetales</taxon>
        <taxon>Saccharomycetaceae</taxon>
        <taxon>Vanderwaltozyma</taxon>
    </lineage>
</organism>
<reference key="1">
    <citation type="journal article" date="2007" name="Proc. Natl. Acad. Sci. U.S.A.">
        <title>Independent sorting-out of thousands of duplicated gene pairs in two yeast species descended from a whole-genome duplication.</title>
        <authorList>
            <person name="Scannell D.R."/>
            <person name="Frank A.C."/>
            <person name="Conant G.C."/>
            <person name="Byrne K.P."/>
            <person name="Woolfit M."/>
            <person name="Wolfe K.H."/>
        </authorList>
    </citation>
    <scope>NUCLEOTIDE SEQUENCE [LARGE SCALE GENOMIC DNA]</scope>
    <source>
        <strain>ATCC 22028 / DSM 70294 / BCRC 21397 / CBS 2163 / NBRC 10782 / NRRL Y-8283 / UCD 57-17</strain>
    </source>
</reference>
<evidence type="ECO:0000250" key="1"/>
<evidence type="ECO:0000255" key="2"/>
<evidence type="ECO:0000305" key="3"/>
<protein>
    <recommendedName>
        <fullName>Spore membrane assembly protein 2</fullName>
    </recommendedName>
</protein>
<dbReference type="EMBL" id="DS480421">
    <property type="protein sequence ID" value="EDO16611.1"/>
    <property type="molecule type" value="Genomic_DNA"/>
</dbReference>
<dbReference type="RefSeq" id="XP_001644469.1">
    <property type="nucleotide sequence ID" value="XM_001644419.1"/>
</dbReference>
<dbReference type="FunCoup" id="A7TMB7">
    <property type="interactions" value="24"/>
</dbReference>
<dbReference type="GeneID" id="5544774"/>
<dbReference type="KEGG" id="vpo:Kpol_520p34"/>
<dbReference type="eggNOG" id="ENOG502QW7F">
    <property type="taxonomic scope" value="Eukaryota"/>
</dbReference>
<dbReference type="HOGENOM" id="CLU_776604_0_0_1"/>
<dbReference type="InParanoid" id="A7TMB7"/>
<dbReference type="OMA" id="TIDMGWS"/>
<dbReference type="OrthoDB" id="4073891at2759"/>
<dbReference type="PhylomeDB" id="A7TMB7"/>
<dbReference type="Proteomes" id="UP000000267">
    <property type="component" value="Unassembled WGS sequence"/>
</dbReference>
<dbReference type="GO" id="GO:0005737">
    <property type="term" value="C:cytoplasm"/>
    <property type="evidence" value="ECO:0007669"/>
    <property type="project" value="EnsemblFungi"/>
</dbReference>
<dbReference type="GO" id="GO:0005628">
    <property type="term" value="C:prospore membrane"/>
    <property type="evidence" value="ECO:0007669"/>
    <property type="project" value="UniProtKB-SubCell"/>
</dbReference>
<dbReference type="GO" id="GO:0070583">
    <property type="term" value="P:spore membrane bending pathway"/>
    <property type="evidence" value="ECO:0007669"/>
    <property type="project" value="EnsemblFungi"/>
</dbReference>
<proteinExistence type="inferred from homology"/>
<comment type="function">
    <text evidence="1">Involved in spore and ascus formation. Required for the efficient assembly of the precursors of the prospore membrane to a continuous prospore membrane (By similarity).</text>
</comment>
<comment type="subcellular location">
    <subcellularLocation>
        <location evidence="1">Prospore membrane</location>
        <topology evidence="1">Multi-pass membrane protein</topology>
    </subcellularLocation>
    <text evidence="1">Localizes to prospore membrane.</text>
</comment>
<comment type="similarity">
    <text evidence="3">Belongs to the SMA2 family.</text>
</comment>
<sequence length="362" mass="40963">MIFLKRFIVWTFLFIVTLIQLLLYLPDFSCISKNGGLPICTSQFNFAIVDSSHITHDFITSIRELLRLLSYLTIDMGWSSGLPAPDAYNDENLVDTFHLNNIYKVNYFGYCKKNGKQKEYCTSNHSSGMDILALLVRDVGIQLGKLSSAYENNTEILGESLVFTYELSLSSLHTFIKGDRQRGNILPKIVTNQGNEQTDLEYSSSKAYDKGVSLAYGLMLFNEIMYFIHIFEITISVHCFLNVILFGFALVWGKKQILLPTLLKITSSLLLVFASISFSGNLLYLLLLKMLEPDPTGITTTGWEMLEVKAGSGFIITCIRVGIQWIFLPVAFITSNHYIQPKKQQTKIDELKSDDESTVKQV</sequence>
<accession>A7TMB7</accession>
<gene>
    <name type="primary">SMA2</name>
    <name type="ORF">Kpol_520p34</name>
</gene>
<name>SMA2_VANPO</name>